<gene>
    <name evidence="1" type="primary">rplP</name>
    <name type="ordered locus">Fnod_1131</name>
</gene>
<dbReference type="EMBL" id="CP000771">
    <property type="protein sequence ID" value="ABS60978.1"/>
    <property type="molecule type" value="Genomic_DNA"/>
</dbReference>
<dbReference type="RefSeq" id="WP_011994291.1">
    <property type="nucleotide sequence ID" value="NC_009718.1"/>
</dbReference>
<dbReference type="SMR" id="A7HM45"/>
<dbReference type="STRING" id="381764.Fnod_1131"/>
<dbReference type="KEGG" id="fno:Fnod_1131"/>
<dbReference type="eggNOG" id="COG0197">
    <property type="taxonomic scope" value="Bacteria"/>
</dbReference>
<dbReference type="HOGENOM" id="CLU_078858_2_1_0"/>
<dbReference type="OrthoDB" id="9802589at2"/>
<dbReference type="Proteomes" id="UP000002415">
    <property type="component" value="Chromosome"/>
</dbReference>
<dbReference type="GO" id="GO:0022625">
    <property type="term" value="C:cytosolic large ribosomal subunit"/>
    <property type="evidence" value="ECO:0007669"/>
    <property type="project" value="TreeGrafter"/>
</dbReference>
<dbReference type="GO" id="GO:0019843">
    <property type="term" value="F:rRNA binding"/>
    <property type="evidence" value="ECO:0007669"/>
    <property type="project" value="UniProtKB-UniRule"/>
</dbReference>
<dbReference type="GO" id="GO:0003735">
    <property type="term" value="F:structural constituent of ribosome"/>
    <property type="evidence" value="ECO:0007669"/>
    <property type="project" value="InterPro"/>
</dbReference>
<dbReference type="GO" id="GO:0000049">
    <property type="term" value="F:tRNA binding"/>
    <property type="evidence" value="ECO:0007669"/>
    <property type="project" value="UniProtKB-KW"/>
</dbReference>
<dbReference type="GO" id="GO:0006412">
    <property type="term" value="P:translation"/>
    <property type="evidence" value="ECO:0007669"/>
    <property type="project" value="UniProtKB-UniRule"/>
</dbReference>
<dbReference type="CDD" id="cd01433">
    <property type="entry name" value="Ribosomal_L16_L10e"/>
    <property type="match status" value="1"/>
</dbReference>
<dbReference type="FunFam" id="3.90.1170.10:FF:000001">
    <property type="entry name" value="50S ribosomal protein L16"/>
    <property type="match status" value="1"/>
</dbReference>
<dbReference type="Gene3D" id="3.90.1170.10">
    <property type="entry name" value="Ribosomal protein L10e/L16"/>
    <property type="match status" value="1"/>
</dbReference>
<dbReference type="HAMAP" id="MF_01342">
    <property type="entry name" value="Ribosomal_uL16"/>
    <property type="match status" value="1"/>
</dbReference>
<dbReference type="InterPro" id="IPR047873">
    <property type="entry name" value="Ribosomal_uL16"/>
</dbReference>
<dbReference type="InterPro" id="IPR000114">
    <property type="entry name" value="Ribosomal_uL16_bact-type"/>
</dbReference>
<dbReference type="InterPro" id="IPR020798">
    <property type="entry name" value="Ribosomal_uL16_CS"/>
</dbReference>
<dbReference type="InterPro" id="IPR016180">
    <property type="entry name" value="Ribosomal_uL16_dom"/>
</dbReference>
<dbReference type="InterPro" id="IPR036920">
    <property type="entry name" value="Ribosomal_uL16_sf"/>
</dbReference>
<dbReference type="NCBIfam" id="TIGR01164">
    <property type="entry name" value="rplP_bact"/>
    <property type="match status" value="1"/>
</dbReference>
<dbReference type="PANTHER" id="PTHR12220">
    <property type="entry name" value="50S/60S RIBOSOMAL PROTEIN L16"/>
    <property type="match status" value="1"/>
</dbReference>
<dbReference type="PANTHER" id="PTHR12220:SF13">
    <property type="entry name" value="LARGE RIBOSOMAL SUBUNIT PROTEIN UL16M"/>
    <property type="match status" value="1"/>
</dbReference>
<dbReference type="Pfam" id="PF00252">
    <property type="entry name" value="Ribosomal_L16"/>
    <property type="match status" value="1"/>
</dbReference>
<dbReference type="PRINTS" id="PR00060">
    <property type="entry name" value="RIBOSOMALL16"/>
</dbReference>
<dbReference type="SUPFAM" id="SSF54686">
    <property type="entry name" value="Ribosomal protein L16p/L10e"/>
    <property type="match status" value="1"/>
</dbReference>
<dbReference type="PROSITE" id="PS00586">
    <property type="entry name" value="RIBOSOMAL_L16_1"/>
    <property type="match status" value="1"/>
</dbReference>
<protein>
    <recommendedName>
        <fullName evidence="1">Large ribosomal subunit protein uL16</fullName>
    </recommendedName>
    <alternativeName>
        <fullName evidence="2">50S ribosomal protein L16</fullName>
    </alternativeName>
</protein>
<sequence length="142" mass="15792">MLMPKRVKYRKQHRGRTKGDAKGGALVMFGEYGLKALEPAWITAQQIEACRLAITRTLKKEGKLWIKIFPDKSYTKHPPETKLGKGKGNVEGWVAVVKPGKVMFEIGGVEEELAIKALEYAATKLPIKTKIVTRHHIGGEAV</sequence>
<organism>
    <name type="scientific">Fervidobacterium nodosum (strain ATCC 35602 / DSM 5306 / Rt17-B1)</name>
    <dbReference type="NCBI Taxonomy" id="381764"/>
    <lineage>
        <taxon>Bacteria</taxon>
        <taxon>Thermotogati</taxon>
        <taxon>Thermotogota</taxon>
        <taxon>Thermotogae</taxon>
        <taxon>Thermotogales</taxon>
        <taxon>Fervidobacteriaceae</taxon>
        <taxon>Fervidobacterium</taxon>
    </lineage>
</organism>
<keyword id="KW-1185">Reference proteome</keyword>
<keyword id="KW-0687">Ribonucleoprotein</keyword>
<keyword id="KW-0689">Ribosomal protein</keyword>
<keyword id="KW-0694">RNA-binding</keyword>
<keyword id="KW-0699">rRNA-binding</keyword>
<keyword id="KW-0820">tRNA-binding</keyword>
<name>RL16_FERNB</name>
<accession>A7HM45</accession>
<feature type="chain" id="PRO_1000073326" description="Large ribosomal subunit protein uL16">
    <location>
        <begin position="1"/>
        <end position="142"/>
    </location>
</feature>
<proteinExistence type="inferred from homology"/>
<reference key="1">
    <citation type="submission" date="2007-07" db="EMBL/GenBank/DDBJ databases">
        <title>Complete sequence of Fervidobacterium nodosum Rt17-B1.</title>
        <authorList>
            <consortium name="US DOE Joint Genome Institute"/>
            <person name="Copeland A."/>
            <person name="Lucas S."/>
            <person name="Lapidus A."/>
            <person name="Barry K."/>
            <person name="Glavina del Rio T."/>
            <person name="Dalin E."/>
            <person name="Tice H."/>
            <person name="Pitluck S."/>
            <person name="Saunders E."/>
            <person name="Brettin T."/>
            <person name="Bruce D."/>
            <person name="Detter J.C."/>
            <person name="Han C."/>
            <person name="Schmutz J."/>
            <person name="Larimer F."/>
            <person name="Land M."/>
            <person name="Hauser L."/>
            <person name="Kyrpides N."/>
            <person name="Mikhailova N."/>
            <person name="Nelson K."/>
            <person name="Gogarten J.P."/>
            <person name="Noll K."/>
            <person name="Richardson P."/>
        </authorList>
    </citation>
    <scope>NUCLEOTIDE SEQUENCE [LARGE SCALE GENOMIC DNA]</scope>
    <source>
        <strain>ATCC 35602 / DSM 5306 / Rt17-B1</strain>
    </source>
</reference>
<comment type="function">
    <text evidence="1">Binds 23S rRNA and is also seen to make contacts with the A and possibly P site tRNAs.</text>
</comment>
<comment type="subunit">
    <text evidence="1">Part of the 50S ribosomal subunit.</text>
</comment>
<comment type="similarity">
    <text evidence="1">Belongs to the universal ribosomal protein uL16 family.</text>
</comment>
<evidence type="ECO:0000255" key="1">
    <source>
        <dbReference type="HAMAP-Rule" id="MF_01342"/>
    </source>
</evidence>
<evidence type="ECO:0000305" key="2"/>